<keyword id="KW-0143">Chaperone</keyword>
<keyword id="KW-0413">Isomerase</keyword>
<keyword id="KW-0574">Periplasm</keyword>
<keyword id="KW-1185">Reference proteome</keyword>
<keyword id="KW-0677">Repeat</keyword>
<keyword id="KW-0697">Rotamase</keyword>
<keyword id="KW-0732">Signal</keyword>
<name>SURA_POLSJ</name>
<comment type="function">
    <text evidence="1">Chaperone involved in the correct folding and assembly of outer membrane proteins. Recognizes specific patterns of aromatic residues and the orientation of their side chains, which are found more frequently in integral outer membrane proteins. May act in both early periplasmic and late outer membrane-associated steps of protein maturation.</text>
</comment>
<comment type="catalytic activity">
    <reaction evidence="1">
        <text>[protein]-peptidylproline (omega=180) = [protein]-peptidylproline (omega=0)</text>
        <dbReference type="Rhea" id="RHEA:16237"/>
        <dbReference type="Rhea" id="RHEA-COMP:10747"/>
        <dbReference type="Rhea" id="RHEA-COMP:10748"/>
        <dbReference type="ChEBI" id="CHEBI:83833"/>
        <dbReference type="ChEBI" id="CHEBI:83834"/>
        <dbReference type="EC" id="5.2.1.8"/>
    </reaction>
</comment>
<comment type="subcellular location">
    <subcellularLocation>
        <location evidence="1">Periplasm</location>
    </subcellularLocation>
    <text evidence="1">Is capable of associating with the outer membrane.</text>
</comment>
<comment type="domain">
    <text evidence="1">The PPIase activity resides only in the second parvulin domain. The N-terminal region and the C-terminal tail are necessary and sufficient for the chaperone activity of SurA. The PPIase activity is dispensable for SurA to function as a chaperone. The N-terminal region and the C-terminal tail are also required for porin recognition.</text>
</comment>
<proteinExistence type="inferred from homology"/>
<protein>
    <recommendedName>
        <fullName evidence="1">Chaperone SurA</fullName>
    </recommendedName>
    <alternativeName>
        <fullName evidence="1">Peptidyl-prolyl cis-trans isomerase SurA</fullName>
        <shortName evidence="1">PPIase SurA</shortName>
        <ecNumber evidence="1">5.2.1.8</ecNumber>
    </alternativeName>
    <alternativeName>
        <fullName evidence="1">Rotamase SurA</fullName>
    </alternativeName>
</protein>
<gene>
    <name evidence="1" type="primary">surA</name>
    <name type="ordered locus">Bpro_4862</name>
</gene>
<evidence type="ECO:0000255" key="1">
    <source>
        <dbReference type="HAMAP-Rule" id="MF_01183"/>
    </source>
</evidence>
<organism>
    <name type="scientific">Polaromonas sp. (strain JS666 / ATCC BAA-500)</name>
    <dbReference type="NCBI Taxonomy" id="296591"/>
    <lineage>
        <taxon>Bacteria</taxon>
        <taxon>Pseudomonadati</taxon>
        <taxon>Pseudomonadota</taxon>
        <taxon>Betaproteobacteria</taxon>
        <taxon>Burkholderiales</taxon>
        <taxon>Comamonadaceae</taxon>
        <taxon>Polaromonas</taxon>
    </lineage>
</organism>
<dbReference type="EC" id="5.2.1.8" evidence="1"/>
<dbReference type="EMBL" id="CP000316">
    <property type="protein sequence ID" value="ABE46738.1"/>
    <property type="molecule type" value="Genomic_DNA"/>
</dbReference>
<dbReference type="RefSeq" id="WP_011485723.1">
    <property type="nucleotide sequence ID" value="NC_007948.1"/>
</dbReference>
<dbReference type="SMR" id="Q121Q4"/>
<dbReference type="STRING" id="296591.Bpro_4862"/>
<dbReference type="KEGG" id="pol:Bpro_4862"/>
<dbReference type="eggNOG" id="COG0760">
    <property type="taxonomic scope" value="Bacteria"/>
</dbReference>
<dbReference type="HOGENOM" id="CLU_034646_11_0_4"/>
<dbReference type="OrthoDB" id="14196at2"/>
<dbReference type="Proteomes" id="UP000001983">
    <property type="component" value="Chromosome"/>
</dbReference>
<dbReference type="GO" id="GO:0030288">
    <property type="term" value="C:outer membrane-bounded periplasmic space"/>
    <property type="evidence" value="ECO:0007669"/>
    <property type="project" value="InterPro"/>
</dbReference>
<dbReference type="GO" id="GO:0042277">
    <property type="term" value="F:peptide binding"/>
    <property type="evidence" value="ECO:0007669"/>
    <property type="project" value="InterPro"/>
</dbReference>
<dbReference type="GO" id="GO:0003755">
    <property type="term" value="F:peptidyl-prolyl cis-trans isomerase activity"/>
    <property type="evidence" value="ECO:0007669"/>
    <property type="project" value="UniProtKB-UniRule"/>
</dbReference>
<dbReference type="GO" id="GO:0051082">
    <property type="term" value="F:unfolded protein binding"/>
    <property type="evidence" value="ECO:0007669"/>
    <property type="project" value="UniProtKB-UniRule"/>
</dbReference>
<dbReference type="GO" id="GO:0043165">
    <property type="term" value="P:Gram-negative-bacterium-type cell outer membrane assembly"/>
    <property type="evidence" value="ECO:0007669"/>
    <property type="project" value="InterPro"/>
</dbReference>
<dbReference type="GO" id="GO:0006457">
    <property type="term" value="P:protein folding"/>
    <property type="evidence" value="ECO:0007669"/>
    <property type="project" value="UniProtKB-UniRule"/>
</dbReference>
<dbReference type="GO" id="GO:0050821">
    <property type="term" value="P:protein stabilization"/>
    <property type="evidence" value="ECO:0007669"/>
    <property type="project" value="InterPro"/>
</dbReference>
<dbReference type="Gene3D" id="3.10.50.40">
    <property type="match status" value="2"/>
</dbReference>
<dbReference type="Gene3D" id="1.10.4030.10">
    <property type="entry name" value="Porin chaperone SurA, peptide-binding domain"/>
    <property type="match status" value="1"/>
</dbReference>
<dbReference type="HAMAP" id="MF_01183">
    <property type="entry name" value="Chaperone_SurA"/>
    <property type="match status" value="1"/>
</dbReference>
<dbReference type="InterPro" id="IPR050280">
    <property type="entry name" value="OMP_Chaperone_SurA"/>
</dbReference>
<dbReference type="InterPro" id="IPR046357">
    <property type="entry name" value="PPIase_dom_sf"/>
</dbReference>
<dbReference type="InterPro" id="IPR000297">
    <property type="entry name" value="PPIase_PpiC"/>
</dbReference>
<dbReference type="InterPro" id="IPR023058">
    <property type="entry name" value="PPIase_PpiC_CS"/>
</dbReference>
<dbReference type="InterPro" id="IPR023034">
    <property type="entry name" value="PPIase_SurA"/>
</dbReference>
<dbReference type="InterPro" id="IPR015391">
    <property type="entry name" value="SurA_N"/>
</dbReference>
<dbReference type="InterPro" id="IPR027304">
    <property type="entry name" value="Trigger_fact/SurA_dom_sf"/>
</dbReference>
<dbReference type="PANTHER" id="PTHR47637">
    <property type="entry name" value="CHAPERONE SURA"/>
    <property type="match status" value="1"/>
</dbReference>
<dbReference type="PANTHER" id="PTHR47637:SF1">
    <property type="entry name" value="CHAPERONE SURA"/>
    <property type="match status" value="1"/>
</dbReference>
<dbReference type="Pfam" id="PF00639">
    <property type="entry name" value="Rotamase"/>
    <property type="match status" value="1"/>
</dbReference>
<dbReference type="Pfam" id="PF13616">
    <property type="entry name" value="Rotamase_3"/>
    <property type="match status" value="1"/>
</dbReference>
<dbReference type="Pfam" id="PF09312">
    <property type="entry name" value="SurA_N"/>
    <property type="match status" value="1"/>
</dbReference>
<dbReference type="SUPFAM" id="SSF54534">
    <property type="entry name" value="FKBP-like"/>
    <property type="match status" value="2"/>
</dbReference>
<dbReference type="SUPFAM" id="SSF109998">
    <property type="entry name" value="Triger factor/SurA peptide-binding domain-like"/>
    <property type="match status" value="1"/>
</dbReference>
<dbReference type="PROSITE" id="PS01096">
    <property type="entry name" value="PPIC_PPIASE_1"/>
    <property type="match status" value="2"/>
</dbReference>
<dbReference type="PROSITE" id="PS50198">
    <property type="entry name" value="PPIC_PPIASE_2"/>
    <property type="match status" value="2"/>
</dbReference>
<feature type="signal peptide" evidence="1">
    <location>
        <begin position="1"/>
        <end position="36"/>
    </location>
</feature>
<feature type="chain" id="PRO_5000117339" description="Chaperone SurA">
    <location>
        <begin position="37"/>
        <end position="473"/>
    </location>
</feature>
<feature type="domain" description="PpiC 1" evidence="1">
    <location>
        <begin position="214"/>
        <end position="315"/>
    </location>
</feature>
<feature type="domain" description="PpiC 2" evidence="1">
    <location>
        <begin position="326"/>
        <end position="425"/>
    </location>
</feature>
<reference key="1">
    <citation type="journal article" date="2008" name="Appl. Environ. Microbiol.">
        <title>The genome of Polaromonas sp. strain JS666: insights into the evolution of a hydrocarbon- and xenobiotic-degrading bacterium, and features of relevance to biotechnology.</title>
        <authorList>
            <person name="Mattes T.E."/>
            <person name="Alexander A.K."/>
            <person name="Richardson P.M."/>
            <person name="Munk A.C."/>
            <person name="Han C.S."/>
            <person name="Stothard P."/>
            <person name="Coleman N.V."/>
        </authorList>
    </citation>
    <scope>NUCLEOTIDE SEQUENCE [LARGE SCALE GENOMIC DNA]</scope>
    <source>
        <strain>JS666 / ATCC BAA-500</strain>
    </source>
</reference>
<accession>Q121Q4</accession>
<sequence>MTNDRLFAGIARVLSVRPLAAALALLLTLPLIGVQAQSLRPSSGLRLPTPAASAGAAAGSASGQRQADFIVAVVNSEPITNSEVRTKLVRTEQQIIQQGSPLPPRRELVPQVLERLISDKAQLQLARSAGMRVDDNAVEAAVQTVARQNQISVDELRRRLKADGIAYSQFESDLRDELLVSRLRQREVDLRVTVTEQDIDQFLREQEGGTELSSLALNLAQILVAVPENATPGQVAALQAKAQQVMDKARGGADFAALANEFSDSPTRGTGGLMGLREADRYPPLFVESTKSLKVGGLAGPIRSGAGFHILKVIEKRQAGMPGSVITQTHARHILLRLSPKQGETAATEKLAALRKRILAGQADFAALARENSEDASAKQGGDLGWANPGMFVPEFEKVMNGLAPNQISDPLVSRFGVHLIQVLERREAQMSQRDQREMARNVLRGKKQEEAYVLWAQEVRGRAYVEYRESPQ</sequence>